<reference key="1">
    <citation type="journal article" date="2003" name="Genome Res.">
        <title>The secreted protein discovery initiative (SPDI), a large-scale effort to identify novel human secreted and transmembrane proteins: a bioinformatics assessment.</title>
        <authorList>
            <person name="Clark H.F."/>
            <person name="Gurney A.L."/>
            <person name="Abaya E."/>
            <person name="Baker K."/>
            <person name="Baldwin D.T."/>
            <person name="Brush J."/>
            <person name="Chen J."/>
            <person name="Chow B."/>
            <person name="Chui C."/>
            <person name="Crowley C."/>
            <person name="Currell B."/>
            <person name="Deuel B."/>
            <person name="Dowd P."/>
            <person name="Eaton D."/>
            <person name="Foster J.S."/>
            <person name="Grimaldi C."/>
            <person name="Gu Q."/>
            <person name="Hass P.E."/>
            <person name="Heldens S."/>
            <person name="Huang A."/>
            <person name="Kim H.S."/>
            <person name="Klimowski L."/>
            <person name="Jin Y."/>
            <person name="Johnson S."/>
            <person name="Lee J."/>
            <person name="Lewis L."/>
            <person name="Liao D."/>
            <person name="Mark M.R."/>
            <person name="Robbie E."/>
            <person name="Sanchez C."/>
            <person name="Schoenfeld J."/>
            <person name="Seshagiri S."/>
            <person name="Simmons L."/>
            <person name="Singh J."/>
            <person name="Smith V."/>
            <person name="Stinson J."/>
            <person name="Vagts A."/>
            <person name="Vandlen R.L."/>
            <person name="Watanabe C."/>
            <person name="Wieand D."/>
            <person name="Woods K."/>
            <person name="Xie M.-H."/>
            <person name="Yansura D.G."/>
            <person name="Yi S."/>
            <person name="Yu G."/>
            <person name="Yuan J."/>
            <person name="Zhang M."/>
            <person name="Zhang Z."/>
            <person name="Goddard A.D."/>
            <person name="Wood W.I."/>
            <person name="Godowski P.J."/>
            <person name="Gray A.M."/>
        </authorList>
    </citation>
    <scope>NUCLEOTIDE SEQUENCE [LARGE SCALE MRNA]</scope>
</reference>
<reference key="2">
    <citation type="journal article" date="2003" name="Nature">
        <title>The DNA sequence and analysis of human chromosome 6.</title>
        <authorList>
            <person name="Mungall A.J."/>
            <person name="Palmer S.A."/>
            <person name="Sims S.K."/>
            <person name="Edwards C.A."/>
            <person name="Ashurst J.L."/>
            <person name="Wilming L."/>
            <person name="Jones M.C."/>
            <person name="Horton R."/>
            <person name="Hunt S.E."/>
            <person name="Scott C.E."/>
            <person name="Gilbert J.G.R."/>
            <person name="Clamp M.E."/>
            <person name="Bethel G."/>
            <person name="Milne S."/>
            <person name="Ainscough R."/>
            <person name="Almeida J.P."/>
            <person name="Ambrose K.D."/>
            <person name="Andrews T.D."/>
            <person name="Ashwell R.I.S."/>
            <person name="Babbage A.K."/>
            <person name="Bagguley C.L."/>
            <person name="Bailey J."/>
            <person name="Banerjee R."/>
            <person name="Barker D.J."/>
            <person name="Barlow K.F."/>
            <person name="Bates K."/>
            <person name="Beare D.M."/>
            <person name="Beasley H."/>
            <person name="Beasley O."/>
            <person name="Bird C.P."/>
            <person name="Blakey S.E."/>
            <person name="Bray-Allen S."/>
            <person name="Brook J."/>
            <person name="Brown A.J."/>
            <person name="Brown J.Y."/>
            <person name="Burford D.C."/>
            <person name="Burrill W."/>
            <person name="Burton J."/>
            <person name="Carder C."/>
            <person name="Carter N.P."/>
            <person name="Chapman J.C."/>
            <person name="Clark S.Y."/>
            <person name="Clark G."/>
            <person name="Clee C.M."/>
            <person name="Clegg S."/>
            <person name="Cobley V."/>
            <person name="Collier R.E."/>
            <person name="Collins J.E."/>
            <person name="Colman L.K."/>
            <person name="Corby N.R."/>
            <person name="Coville G.J."/>
            <person name="Culley K.M."/>
            <person name="Dhami P."/>
            <person name="Davies J."/>
            <person name="Dunn M."/>
            <person name="Earthrowl M.E."/>
            <person name="Ellington A.E."/>
            <person name="Evans K.A."/>
            <person name="Faulkner L."/>
            <person name="Francis M.D."/>
            <person name="Frankish A."/>
            <person name="Frankland J."/>
            <person name="French L."/>
            <person name="Garner P."/>
            <person name="Garnett J."/>
            <person name="Ghori M.J."/>
            <person name="Gilby L.M."/>
            <person name="Gillson C.J."/>
            <person name="Glithero R.J."/>
            <person name="Grafham D.V."/>
            <person name="Grant M."/>
            <person name="Gribble S."/>
            <person name="Griffiths C."/>
            <person name="Griffiths M.N.D."/>
            <person name="Hall R."/>
            <person name="Halls K.S."/>
            <person name="Hammond S."/>
            <person name="Harley J.L."/>
            <person name="Hart E.A."/>
            <person name="Heath P.D."/>
            <person name="Heathcott R."/>
            <person name="Holmes S.J."/>
            <person name="Howden P.J."/>
            <person name="Howe K.L."/>
            <person name="Howell G.R."/>
            <person name="Huckle E."/>
            <person name="Humphray S.J."/>
            <person name="Humphries M.D."/>
            <person name="Hunt A.R."/>
            <person name="Johnson C.M."/>
            <person name="Joy A.A."/>
            <person name="Kay M."/>
            <person name="Keenan S.J."/>
            <person name="Kimberley A.M."/>
            <person name="King A."/>
            <person name="Laird G.K."/>
            <person name="Langford C."/>
            <person name="Lawlor S."/>
            <person name="Leongamornlert D.A."/>
            <person name="Leversha M."/>
            <person name="Lloyd C.R."/>
            <person name="Lloyd D.M."/>
            <person name="Loveland J.E."/>
            <person name="Lovell J."/>
            <person name="Martin S."/>
            <person name="Mashreghi-Mohammadi M."/>
            <person name="Maslen G.L."/>
            <person name="Matthews L."/>
            <person name="McCann O.T."/>
            <person name="McLaren S.J."/>
            <person name="McLay K."/>
            <person name="McMurray A."/>
            <person name="Moore M.J.F."/>
            <person name="Mullikin J.C."/>
            <person name="Niblett D."/>
            <person name="Nickerson T."/>
            <person name="Novik K.L."/>
            <person name="Oliver K."/>
            <person name="Overton-Larty E.K."/>
            <person name="Parker A."/>
            <person name="Patel R."/>
            <person name="Pearce A.V."/>
            <person name="Peck A.I."/>
            <person name="Phillimore B.J.C.T."/>
            <person name="Phillips S."/>
            <person name="Plumb R.W."/>
            <person name="Porter K.M."/>
            <person name="Ramsey Y."/>
            <person name="Ranby S.A."/>
            <person name="Rice C.M."/>
            <person name="Ross M.T."/>
            <person name="Searle S.M."/>
            <person name="Sehra H.K."/>
            <person name="Sheridan E."/>
            <person name="Skuce C.D."/>
            <person name="Smith S."/>
            <person name="Smith M."/>
            <person name="Spraggon L."/>
            <person name="Squares S.L."/>
            <person name="Steward C.A."/>
            <person name="Sycamore N."/>
            <person name="Tamlyn-Hall G."/>
            <person name="Tester J."/>
            <person name="Theaker A.J."/>
            <person name="Thomas D.W."/>
            <person name="Thorpe A."/>
            <person name="Tracey A."/>
            <person name="Tromans A."/>
            <person name="Tubby B."/>
            <person name="Wall M."/>
            <person name="Wallis J.M."/>
            <person name="West A.P."/>
            <person name="White S.S."/>
            <person name="Whitehead S.L."/>
            <person name="Whittaker H."/>
            <person name="Wild A."/>
            <person name="Willey D.J."/>
            <person name="Wilmer T.E."/>
            <person name="Wood J.M."/>
            <person name="Wray P.W."/>
            <person name="Wyatt J.C."/>
            <person name="Young L."/>
            <person name="Younger R.M."/>
            <person name="Bentley D.R."/>
            <person name="Coulson A."/>
            <person name="Durbin R.M."/>
            <person name="Hubbard T."/>
            <person name="Sulston J.E."/>
            <person name="Dunham I."/>
            <person name="Rogers J."/>
            <person name="Beck S."/>
        </authorList>
    </citation>
    <scope>NUCLEOTIDE SEQUENCE [LARGE SCALE GENOMIC DNA]</scope>
</reference>
<reference key="3">
    <citation type="submission" date="2005-07" db="EMBL/GenBank/DDBJ databases">
        <authorList>
            <person name="Mural R.J."/>
            <person name="Istrail S."/>
            <person name="Sutton G.G."/>
            <person name="Florea L."/>
            <person name="Halpern A.L."/>
            <person name="Mobarry C.M."/>
            <person name="Lippert R."/>
            <person name="Walenz B."/>
            <person name="Shatkay H."/>
            <person name="Dew I."/>
            <person name="Miller J.R."/>
            <person name="Flanigan M.J."/>
            <person name="Edwards N.J."/>
            <person name="Bolanos R."/>
            <person name="Fasulo D."/>
            <person name="Halldorsson B.V."/>
            <person name="Hannenhalli S."/>
            <person name="Turner R."/>
            <person name="Yooseph S."/>
            <person name="Lu F."/>
            <person name="Nusskern D.R."/>
            <person name="Shue B.C."/>
            <person name="Zheng X.H."/>
            <person name="Zhong F."/>
            <person name="Delcher A.L."/>
            <person name="Huson D.H."/>
            <person name="Kravitz S.A."/>
            <person name="Mouchard L."/>
            <person name="Reinert K."/>
            <person name="Remington K.A."/>
            <person name="Clark A.G."/>
            <person name="Waterman M.S."/>
            <person name="Eichler E.E."/>
            <person name="Adams M.D."/>
            <person name="Hunkapiller M.W."/>
            <person name="Myers E.W."/>
            <person name="Venter J.C."/>
        </authorList>
    </citation>
    <scope>NUCLEOTIDE SEQUENCE [LARGE SCALE GENOMIC DNA]</scope>
</reference>
<reference key="4">
    <citation type="journal article" date="2004" name="Genome Res.">
        <title>The status, quality, and expansion of the NIH full-length cDNA project: the Mammalian Gene Collection (MGC).</title>
        <authorList>
            <consortium name="The MGC Project Team"/>
        </authorList>
    </citation>
    <scope>NUCLEOTIDE SEQUENCE [LARGE SCALE MRNA]</scope>
    <source>
        <tissue>Colon</tissue>
    </source>
</reference>
<reference key="5">
    <citation type="journal article" date="2004" name="Protein Sci.">
        <title>Signal peptide prediction based on analysis of experimentally verified cleavage sites.</title>
        <authorList>
            <person name="Zhang Z."/>
            <person name="Henzel W.J."/>
        </authorList>
    </citation>
    <scope>PROTEIN SEQUENCE OF 20-34</scope>
</reference>
<reference key="6">
    <citation type="journal article" date="2012" name="PLoS ONE">
        <title>SFTA2--a novel secretory peptide highly expressed in the lung--is modulated by lipopolysaccharide but not hyperoxia.</title>
        <authorList>
            <person name="Mittal R.A."/>
            <person name="Hammel M."/>
            <person name="Schwarz J."/>
            <person name="Heschl K.M."/>
            <person name="Bretschneider N."/>
            <person name="Flemmer A.W."/>
            <person name="Herber-Jonat S."/>
            <person name="Koenigshoff M."/>
            <person name="Eickelberg O."/>
            <person name="Holzinger A."/>
        </authorList>
    </citation>
    <scope>SUBCELLULAR LOCATION</scope>
    <scope>TISSUE SPECIFICITY</scope>
    <scope>GLYCOSYLATION</scope>
</reference>
<feature type="signal peptide" evidence="2">
    <location>
        <begin position="1"/>
        <end position="19"/>
    </location>
</feature>
<feature type="chain" id="PRO_0000022610" description="Surfactant-associated protein 2">
    <location>
        <begin position="20"/>
        <end position="78"/>
    </location>
</feature>
<feature type="glycosylation site" description="N-linked (GlcNAc...) asparagine" evidence="1">
    <location>
        <position position="37"/>
    </location>
</feature>
<feature type="sequence variant" id="VAR_034423" description="In dbSNP:rs3131787.">
    <original>N</original>
    <variation>S</variation>
    <location>
        <position position="37"/>
    </location>
</feature>
<keyword id="KW-0968">Cytoplasmic vesicle</keyword>
<keyword id="KW-0903">Direct protein sequencing</keyword>
<keyword id="KW-0325">Glycoprotein</keyword>
<keyword id="KW-0333">Golgi apparatus</keyword>
<keyword id="KW-1267">Proteomics identification</keyword>
<keyword id="KW-1185">Reference proteome</keyword>
<keyword id="KW-0964">Secreted</keyword>
<keyword id="KW-0732">Signal</keyword>
<comment type="function">
    <text evidence="4">Putative surfactant protein.</text>
</comment>
<comment type="subcellular location">
    <subcellularLocation>
        <location evidence="5">Secreted</location>
    </subcellularLocation>
    <subcellularLocation>
        <location evidence="3">Cytoplasmic vesicle</location>
        <location evidence="3">Secretory vesicle</location>
    </subcellularLocation>
    <subcellularLocation>
        <location evidence="3">Golgi apparatus</location>
    </subcellularLocation>
</comment>
<comment type="tissue specificity">
    <text evidence="3">Predominantly expressed in lung, where it is detected in type II pneumocytes in the alveolus, and in nonciliated epithelium in bronchioli (at protein level). Also detected at lower levels in cervix, esophagus, stomach, testis and kidney.</text>
</comment>
<comment type="PTM">
    <text evidence="3">N-glycosylated.</text>
</comment>
<protein>
    <recommendedName>
        <fullName>Surfactant-associated protein 2</fullName>
    </recommendedName>
    <alternativeName>
        <fullName>Surfactant-associated protein G</fullName>
        <shortName>SP-G</shortName>
    </alternativeName>
</protein>
<sequence length="78" mass="8396">MGSGLPLVLLLTLLGSSHGTGPGMTLQLKLKESFLTNSSYESSFLELLEKLCLLLHLPSGTSVTLHHARSQHHVVCNT</sequence>
<gene>
    <name type="primary">SFTA2</name>
    <name type="synonym">SFTPG</name>
    <name type="ORF">UNQ541/PRO1098</name>
</gene>
<accession>Q6UW10</accession>
<accession>A2ABK7</accession>
<accession>A2ACH1</accession>
<accession>B7ZCJ7</accession>
<proteinExistence type="evidence at protein level"/>
<evidence type="ECO:0000255" key="1"/>
<evidence type="ECO:0000269" key="2">
    <source>
    </source>
</evidence>
<evidence type="ECO:0000269" key="3">
    <source>
    </source>
</evidence>
<evidence type="ECO:0000305" key="4"/>
<evidence type="ECO:0000305" key="5">
    <source>
    </source>
</evidence>
<name>SFTA2_HUMAN</name>
<dbReference type="EMBL" id="AY359057">
    <property type="protein sequence ID" value="AAQ89416.1"/>
    <property type="molecule type" value="mRNA"/>
</dbReference>
<dbReference type="EMBL" id="AL773541">
    <property type="status" value="NOT_ANNOTATED_CDS"/>
    <property type="molecule type" value="Genomic_DNA"/>
</dbReference>
<dbReference type="EMBL" id="AL662854">
    <property type="status" value="NOT_ANNOTATED_CDS"/>
    <property type="molecule type" value="Genomic_DNA"/>
</dbReference>
<dbReference type="EMBL" id="AL669830">
    <property type="status" value="NOT_ANNOTATED_CDS"/>
    <property type="molecule type" value="Genomic_DNA"/>
</dbReference>
<dbReference type="EMBL" id="CR759747">
    <property type="status" value="NOT_ANNOTATED_CDS"/>
    <property type="molecule type" value="Genomic_DNA"/>
</dbReference>
<dbReference type="EMBL" id="BX927194">
    <property type="status" value="NOT_ANNOTATED_CDS"/>
    <property type="molecule type" value="Genomic_DNA"/>
</dbReference>
<dbReference type="EMBL" id="CR936875">
    <property type="status" value="NOT_ANNOTATED_CDS"/>
    <property type="molecule type" value="Genomic_DNA"/>
</dbReference>
<dbReference type="EMBL" id="CH471081">
    <property type="protein sequence ID" value="EAX03350.1"/>
    <property type="molecule type" value="Genomic_DNA"/>
</dbReference>
<dbReference type="EMBL" id="BC039677">
    <property type="protein sequence ID" value="AAH39677.1"/>
    <property type="molecule type" value="mRNA"/>
</dbReference>
<dbReference type="CCDS" id="CCDS4691.1"/>
<dbReference type="RefSeq" id="NP_995326.1">
    <property type="nucleotide sequence ID" value="NM_205854.3"/>
</dbReference>
<dbReference type="BioGRID" id="133117">
    <property type="interactions" value="46"/>
</dbReference>
<dbReference type="FunCoup" id="Q6UW10">
    <property type="interactions" value="11"/>
</dbReference>
<dbReference type="IntAct" id="Q6UW10">
    <property type="interactions" value="8"/>
</dbReference>
<dbReference type="STRING" id="9606.ENSP00000351989"/>
<dbReference type="GlyCosmos" id="Q6UW10">
    <property type="glycosylation" value="1 site, No reported glycans"/>
</dbReference>
<dbReference type="GlyGen" id="Q6UW10">
    <property type="glycosylation" value="1 site"/>
</dbReference>
<dbReference type="iPTMnet" id="Q6UW10"/>
<dbReference type="PhosphoSitePlus" id="Q6UW10"/>
<dbReference type="BioMuta" id="SFTA2"/>
<dbReference type="MassIVE" id="Q6UW10"/>
<dbReference type="PaxDb" id="9606-ENSP00000351989"/>
<dbReference type="PeptideAtlas" id="Q6UW10"/>
<dbReference type="Antibodypedia" id="82321">
    <property type="antibodies" value="3 antibodies from 2 providers"/>
</dbReference>
<dbReference type="DNASU" id="389376"/>
<dbReference type="Ensembl" id="ENST00000359086.4">
    <property type="protein sequence ID" value="ENSP00000351989.3"/>
    <property type="gene ID" value="ENSG00000196260.5"/>
</dbReference>
<dbReference type="Ensembl" id="ENST00000383539.4">
    <property type="protein sequence ID" value="ENSP00000373031.4"/>
    <property type="gene ID" value="ENSG00000206465.4"/>
</dbReference>
<dbReference type="Ensembl" id="ENST00000429290.2">
    <property type="protein sequence ID" value="ENSP00000390291.2"/>
    <property type="gene ID" value="ENSG00000230072.2"/>
</dbReference>
<dbReference type="Ensembl" id="ENST00000454649.2">
    <property type="protein sequence ID" value="ENSP00000398777.2"/>
    <property type="gene ID" value="ENSG00000237814.2"/>
</dbReference>
<dbReference type="Ensembl" id="ENST00000457919.2">
    <property type="protein sequence ID" value="ENSP00000407762.2"/>
    <property type="gene ID" value="ENSG00000225454.2"/>
</dbReference>
<dbReference type="GeneID" id="389376"/>
<dbReference type="KEGG" id="hsa:389376"/>
<dbReference type="MANE-Select" id="ENST00000359086.4">
    <property type="protein sequence ID" value="ENSP00000351989.3"/>
    <property type="RefSeq nucleotide sequence ID" value="NM_205854.3"/>
    <property type="RefSeq protein sequence ID" value="NP_995326.1"/>
</dbReference>
<dbReference type="UCSC" id="uc003nsf.4">
    <property type="organism name" value="human"/>
</dbReference>
<dbReference type="AGR" id="HGNC:18386"/>
<dbReference type="CTD" id="389376"/>
<dbReference type="DisGeNET" id="389376"/>
<dbReference type="GeneCards" id="SFTA2"/>
<dbReference type="HGNC" id="HGNC:18386">
    <property type="gene designation" value="SFTA2"/>
</dbReference>
<dbReference type="HPA" id="ENSG00000196260">
    <property type="expression patterns" value="Group enriched (esophagus, lung)"/>
</dbReference>
<dbReference type="neXtProt" id="NX_Q6UW10"/>
<dbReference type="OpenTargets" id="ENSG00000196260"/>
<dbReference type="PharmGKB" id="PA164725669"/>
<dbReference type="VEuPathDB" id="HostDB:ENSG00000196260"/>
<dbReference type="eggNOG" id="ENOG502TGNM">
    <property type="taxonomic scope" value="Eukaryota"/>
</dbReference>
<dbReference type="GeneTree" id="ENSGT00390000011767"/>
<dbReference type="HOGENOM" id="CLU_173432_0_0_1"/>
<dbReference type="InParanoid" id="Q6UW10"/>
<dbReference type="OMA" id="GPRMILQ"/>
<dbReference type="PAN-GO" id="Q6UW10">
    <property type="GO annotations" value="0 GO annotations based on evolutionary models"/>
</dbReference>
<dbReference type="PhylomeDB" id="Q6UW10"/>
<dbReference type="TreeFam" id="TF354134"/>
<dbReference type="PathwayCommons" id="Q6UW10"/>
<dbReference type="SignaLink" id="Q6UW10"/>
<dbReference type="BioGRID-ORCS" id="389376">
    <property type="hits" value="58 hits in 1140 CRISPR screens"/>
</dbReference>
<dbReference type="GenomeRNAi" id="389376"/>
<dbReference type="Pharos" id="Q6UW10">
    <property type="development level" value="Tdark"/>
</dbReference>
<dbReference type="PRO" id="PR:Q6UW10"/>
<dbReference type="Proteomes" id="UP000005640">
    <property type="component" value="Chromosome 6"/>
</dbReference>
<dbReference type="RNAct" id="Q6UW10">
    <property type="molecule type" value="protein"/>
</dbReference>
<dbReference type="Bgee" id="ENSG00000196260">
    <property type="expression patterns" value="Expressed in right lung and 87 other cell types or tissues"/>
</dbReference>
<dbReference type="ExpressionAtlas" id="Q6UW10">
    <property type="expression patterns" value="baseline and differential"/>
</dbReference>
<dbReference type="GO" id="GO:0005576">
    <property type="term" value="C:extracellular region"/>
    <property type="evidence" value="ECO:0007669"/>
    <property type="project" value="UniProtKB-SubCell"/>
</dbReference>
<dbReference type="GO" id="GO:0005794">
    <property type="term" value="C:Golgi apparatus"/>
    <property type="evidence" value="ECO:0007669"/>
    <property type="project" value="UniProtKB-SubCell"/>
</dbReference>
<dbReference type="GO" id="GO:0030133">
    <property type="term" value="C:transport vesicle"/>
    <property type="evidence" value="ECO:0007669"/>
    <property type="project" value="UniProtKB-SubCell"/>
</dbReference>
<dbReference type="InterPro" id="IPR028198">
    <property type="entry name" value="SFTA2"/>
</dbReference>
<dbReference type="PANTHER" id="PTHR38500">
    <property type="entry name" value="SURFACTANT-ASSOCIATED PROTEIN 2"/>
    <property type="match status" value="1"/>
</dbReference>
<dbReference type="PANTHER" id="PTHR38500:SF1">
    <property type="entry name" value="SURFACTANT-ASSOCIATED PROTEIN 2"/>
    <property type="match status" value="1"/>
</dbReference>
<dbReference type="Pfam" id="PF15210">
    <property type="entry name" value="SFTA2"/>
    <property type="match status" value="1"/>
</dbReference>
<organism>
    <name type="scientific">Homo sapiens</name>
    <name type="common">Human</name>
    <dbReference type="NCBI Taxonomy" id="9606"/>
    <lineage>
        <taxon>Eukaryota</taxon>
        <taxon>Metazoa</taxon>
        <taxon>Chordata</taxon>
        <taxon>Craniata</taxon>
        <taxon>Vertebrata</taxon>
        <taxon>Euteleostomi</taxon>
        <taxon>Mammalia</taxon>
        <taxon>Eutheria</taxon>
        <taxon>Euarchontoglires</taxon>
        <taxon>Primates</taxon>
        <taxon>Haplorrhini</taxon>
        <taxon>Catarrhini</taxon>
        <taxon>Hominidae</taxon>
        <taxon>Homo</taxon>
    </lineage>
</organism>